<reference key="1">
    <citation type="journal article" date="2004" name="Nature">
        <title>Genome evolution in yeasts.</title>
        <authorList>
            <person name="Dujon B."/>
            <person name="Sherman D."/>
            <person name="Fischer G."/>
            <person name="Durrens P."/>
            <person name="Casaregola S."/>
            <person name="Lafontaine I."/>
            <person name="de Montigny J."/>
            <person name="Marck C."/>
            <person name="Neuveglise C."/>
            <person name="Talla E."/>
            <person name="Goffard N."/>
            <person name="Frangeul L."/>
            <person name="Aigle M."/>
            <person name="Anthouard V."/>
            <person name="Babour A."/>
            <person name="Barbe V."/>
            <person name="Barnay S."/>
            <person name="Blanchin S."/>
            <person name="Beckerich J.-M."/>
            <person name="Beyne E."/>
            <person name="Bleykasten C."/>
            <person name="Boisrame A."/>
            <person name="Boyer J."/>
            <person name="Cattolico L."/>
            <person name="Confanioleri F."/>
            <person name="de Daruvar A."/>
            <person name="Despons L."/>
            <person name="Fabre E."/>
            <person name="Fairhead C."/>
            <person name="Ferry-Dumazet H."/>
            <person name="Groppi A."/>
            <person name="Hantraye F."/>
            <person name="Hennequin C."/>
            <person name="Jauniaux N."/>
            <person name="Joyet P."/>
            <person name="Kachouri R."/>
            <person name="Kerrest A."/>
            <person name="Koszul R."/>
            <person name="Lemaire M."/>
            <person name="Lesur I."/>
            <person name="Ma L."/>
            <person name="Muller H."/>
            <person name="Nicaud J.-M."/>
            <person name="Nikolski M."/>
            <person name="Oztas S."/>
            <person name="Ozier-Kalogeropoulos O."/>
            <person name="Pellenz S."/>
            <person name="Potier S."/>
            <person name="Richard G.-F."/>
            <person name="Straub M.-L."/>
            <person name="Suleau A."/>
            <person name="Swennen D."/>
            <person name="Tekaia F."/>
            <person name="Wesolowski-Louvel M."/>
            <person name="Westhof E."/>
            <person name="Wirth B."/>
            <person name="Zeniou-Meyer M."/>
            <person name="Zivanovic Y."/>
            <person name="Bolotin-Fukuhara M."/>
            <person name="Thierry A."/>
            <person name="Bouchier C."/>
            <person name="Caudron B."/>
            <person name="Scarpelli C."/>
            <person name="Gaillardin C."/>
            <person name="Weissenbach J."/>
            <person name="Wincker P."/>
            <person name="Souciet J.-L."/>
        </authorList>
    </citation>
    <scope>NUCLEOTIDE SEQUENCE [LARGE SCALE GENOMIC DNA]</scope>
    <source>
        <strain>ATCC 36239 / CBS 767 / BCRC 21394 / JCM 1990 / NBRC 0083 / IGC 2968</strain>
    </source>
</reference>
<name>PRP28_DEBHA</name>
<sequence>MSKRPISVEELIGKSQSAEVISKPKFLSKSERQKLSLQRNQEIQDKKRQQSTVNNGAKKRYNNSIEDNPEPKKINKKLKKGRNFNFDWDEEEDTSNNYQPLVRYDNRTNPPDLGLSDMHWSEKQIDDMTTRDWRIFKEDYNITSKGGDIENPLRCWAESKLPAKLLNILIKNLGYDSPTPIQRASIPLALNGRDIVGIAETGSGKTLAFLLPLFSYILSVDSNYLLYEHQQESNFNKPLGLILAPTRELALQITKEAKLFGDKLNLNVVTIIGGHQYEETVHSVRNGVHIVVATPGRLIDSLERGIINLSNCYFFTMDEADKMIDMGFEKSLQSILNYLPASEKLETTIDGKIFNIKKRITLMFTATISPPIEKITKNYLMKPGYLFIGNVGEAVDNINQQFEYFGARQSSDEILDPKKLDKLFSILRFHKDENRNYSIIIFANFKKACEELAYELSRKGFSDNTVIHGSKSQEARERAIDSFREGKDKILIATDVAARGIDIPNVSLVVNYQMTKKFDEYIHRIGRTGRAGNKGTSCTFIDDGDSEVFLDLKKFLNKGKKKCPEWLLKHSSTQSQILRD</sequence>
<comment type="function">
    <text evidence="1">ATP-dependent RNA helicase involved in mRNA splicing. May destabilize the U1/5'-splice site duplex to permit an effective competition for the 5'-splice site by the U6 snRNA, resulting in the switch between U1 and U6 at the 5'-splice site. May also act to unwind the U4/U6 base-pairing interaction in the U4/U6/U5 snRNP, facilitating the first covalent step of splicing (By similarity).</text>
</comment>
<comment type="catalytic activity">
    <reaction>
        <text>ATP + H2O = ADP + phosphate + H(+)</text>
        <dbReference type="Rhea" id="RHEA:13065"/>
        <dbReference type="ChEBI" id="CHEBI:15377"/>
        <dbReference type="ChEBI" id="CHEBI:15378"/>
        <dbReference type="ChEBI" id="CHEBI:30616"/>
        <dbReference type="ChEBI" id="CHEBI:43474"/>
        <dbReference type="ChEBI" id="CHEBI:456216"/>
        <dbReference type="EC" id="3.6.4.13"/>
    </reaction>
</comment>
<comment type="subunit">
    <text evidence="1">Component of the U5 snRNP complex.</text>
</comment>
<comment type="subcellular location">
    <subcellularLocation>
        <location evidence="1">Cytoplasm</location>
    </subcellularLocation>
    <subcellularLocation>
        <location evidence="1">Nucleus</location>
    </subcellularLocation>
</comment>
<comment type="domain">
    <text>The Q motif is unique to and characteristic of the DEAD box family of RNA helicases and controls ATP binding and hydrolysis.</text>
</comment>
<comment type="similarity">
    <text evidence="5">Belongs to the DEAD box helicase family. DDX23/PRP28 subfamily.</text>
</comment>
<evidence type="ECO:0000250" key="1"/>
<evidence type="ECO:0000255" key="2">
    <source>
        <dbReference type="PROSITE-ProRule" id="PRU00541"/>
    </source>
</evidence>
<evidence type="ECO:0000255" key="3">
    <source>
        <dbReference type="PROSITE-ProRule" id="PRU00542"/>
    </source>
</evidence>
<evidence type="ECO:0000256" key="4">
    <source>
        <dbReference type="SAM" id="MobiDB-lite"/>
    </source>
</evidence>
<evidence type="ECO:0000305" key="5"/>
<keyword id="KW-0067">ATP-binding</keyword>
<keyword id="KW-0963">Cytoplasm</keyword>
<keyword id="KW-0347">Helicase</keyword>
<keyword id="KW-0378">Hydrolase</keyword>
<keyword id="KW-0507">mRNA processing</keyword>
<keyword id="KW-0508">mRNA splicing</keyword>
<keyword id="KW-0547">Nucleotide-binding</keyword>
<keyword id="KW-0539">Nucleus</keyword>
<keyword id="KW-1185">Reference proteome</keyword>
<dbReference type="EC" id="3.6.4.13"/>
<dbReference type="EMBL" id="CR382138">
    <property type="protein sequence ID" value="CAG89165.2"/>
    <property type="molecule type" value="Genomic_DNA"/>
</dbReference>
<dbReference type="RefSeq" id="XP_460822.2">
    <property type="nucleotide sequence ID" value="XM_460822.1"/>
</dbReference>
<dbReference type="SMR" id="Q6BLU9"/>
<dbReference type="FunCoup" id="Q6BLU9">
    <property type="interactions" value="970"/>
</dbReference>
<dbReference type="STRING" id="284592.Q6BLU9"/>
<dbReference type="GeneID" id="2904336"/>
<dbReference type="KEGG" id="dha:DEHA2F10538g"/>
<dbReference type="VEuPathDB" id="FungiDB:DEHA2F10538g"/>
<dbReference type="eggNOG" id="KOG0333">
    <property type="taxonomic scope" value="Eukaryota"/>
</dbReference>
<dbReference type="HOGENOM" id="CLU_003041_11_4_1"/>
<dbReference type="InParanoid" id="Q6BLU9"/>
<dbReference type="OMA" id="IFINYKR"/>
<dbReference type="OrthoDB" id="196131at2759"/>
<dbReference type="Proteomes" id="UP000000599">
    <property type="component" value="Chromosome F"/>
</dbReference>
<dbReference type="GO" id="GO:0005737">
    <property type="term" value="C:cytoplasm"/>
    <property type="evidence" value="ECO:0007669"/>
    <property type="project" value="UniProtKB-SubCell"/>
</dbReference>
<dbReference type="GO" id="GO:0005634">
    <property type="term" value="C:nucleus"/>
    <property type="evidence" value="ECO:0007669"/>
    <property type="project" value="UniProtKB-SubCell"/>
</dbReference>
<dbReference type="GO" id="GO:0005524">
    <property type="term" value="F:ATP binding"/>
    <property type="evidence" value="ECO:0007669"/>
    <property type="project" value="UniProtKB-KW"/>
</dbReference>
<dbReference type="GO" id="GO:0016887">
    <property type="term" value="F:ATP hydrolysis activity"/>
    <property type="evidence" value="ECO:0007669"/>
    <property type="project" value="RHEA"/>
</dbReference>
<dbReference type="GO" id="GO:0003676">
    <property type="term" value="F:nucleic acid binding"/>
    <property type="evidence" value="ECO:0007669"/>
    <property type="project" value="InterPro"/>
</dbReference>
<dbReference type="GO" id="GO:0003724">
    <property type="term" value="F:RNA helicase activity"/>
    <property type="evidence" value="ECO:0007669"/>
    <property type="project" value="UniProtKB-EC"/>
</dbReference>
<dbReference type="GO" id="GO:0006397">
    <property type="term" value="P:mRNA processing"/>
    <property type="evidence" value="ECO:0007669"/>
    <property type="project" value="UniProtKB-KW"/>
</dbReference>
<dbReference type="GO" id="GO:0008380">
    <property type="term" value="P:RNA splicing"/>
    <property type="evidence" value="ECO:0007669"/>
    <property type="project" value="UniProtKB-KW"/>
</dbReference>
<dbReference type="CDD" id="cd18787">
    <property type="entry name" value="SF2_C_DEAD"/>
    <property type="match status" value="1"/>
</dbReference>
<dbReference type="Gene3D" id="3.40.50.300">
    <property type="entry name" value="P-loop containing nucleotide triphosphate hydrolases"/>
    <property type="match status" value="2"/>
</dbReference>
<dbReference type="InterPro" id="IPR011545">
    <property type="entry name" value="DEAD/DEAH_box_helicase_dom"/>
</dbReference>
<dbReference type="InterPro" id="IPR014001">
    <property type="entry name" value="Helicase_ATP-bd"/>
</dbReference>
<dbReference type="InterPro" id="IPR001650">
    <property type="entry name" value="Helicase_C-like"/>
</dbReference>
<dbReference type="InterPro" id="IPR027417">
    <property type="entry name" value="P-loop_NTPase"/>
</dbReference>
<dbReference type="InterPro" id="IPR014014">
    <property type="entry name" value="RNA_helicase_DEAD_Q_motif"/>
</dbReference>
<dbReference type="PANTHER" id="PTHR47958">
    <property type="entry name" value="ATP-DEPENDENT RNA HELICASE DBP3"/>
    <property type="match status" value="1"/>
</dbReference>
<dbReference type="Pfam" id="PF00270">
    <property type="entry name" value="DEAD"/>
    <property type="match status" value="1"/>
</dbReference>
<dbReference type="Pfam" id="PF00271">
    <property type="entry name" value="Helicase_C"/>
    <property type="match status" value="1"/>
</dbReference>
<dbReference type="SMART" id="SM00487">
    <property type="entry name" value="DEXDc"/>
    <property type="match status" value="1"/>
</dbReference>
<dbReference type="SMART" id="SM00490">
    <property type="entry name" value="HELICc"/>
    <property type="match status" value="1"/>
</dbReference>
<dbReference type="SUPFAM" id="SSF52540">
    <property type="entry name" value="P-loop containing nucleoside triphosphate hydrolases"/>
    <property type="match status" value="2"/>
</dbReference>
<dbReference type="PROSITE" id="PS51192">
    <property type="entry name" value="HELICASE_ATP_BIND_1"/>
    <property type="match status" value="1"/>
</dbReference>
<dbReference type="PROSITE" id="PS51194">
    <property type="entry name" value="HELICASE_CTER"/>
    <property type="match status" value="1"/>
</dbReference>
<dbReference type="PROSITE" id="PS51195">
    <property type="entry name" value="Q_MOTIF"/>
    <property type="match status" value="1"/>
</dbReference>
<feature type="chain" id="PRO_0000232374" description="Pre-mRNA-splicing ATP-dependent RNA helicase PRP28">
    <location>
        <begin position="1"/>
        <end position="580"/>
    </location>
</feature>
<feature type="domain" description="Helicase ATP-binding" evidence="2">
    <location>
        <begin position="186"/>
        <end position="386"/>
    </location>
</feature>
<feature type="domain" description="Helicase C-terminal" evidence="3">
    <location>
        <begin position="422"/>
        <end position="571"/>
    </location>
</feature>
<feature type="region of interest" description="Disordered" evidence="4">
    <location>
        <begin position="23"/>
        <end position="75"/>
    </location>
</feature>
<feature type="short sequence motif" description="Q motif">
    <location>
        <begin position="154"/>
        <end position="183"/>
    </location>
</feature>
<feature type="short sequence motif" description="DEAD box">
    <location>
        <begin position="318"/>
        <end position="321"/>
    </location>
</feature>
<feature type="binding site" evidence="2">
    <location>
        <begin position="199"/>
        <end position="206"/>
    </location>
    <ligand>
        <name>ATP</name>
        <dbReference type="ChEBI" id="CHEBI:30616"/>
    </ligand>
</feature>
<organism>
    <name type="scientific">Debaryomyces hansenii (strain ATCC 36239 / CBS 767 / BCRC 21394 / JCM 1990 / NBRC 0083 / IGC 2968)</name>
    <name type="common">Yeast</name>
    <name type="synonym">Torulaspora hansenii</name>
    <dbReference type="NCBI Taxonomy" id="284592"/>
    <lineage>
        <taxon>Eukaryota</taxon>
        <taxon>Fungi</taxon>
        <taxon>Dikarya</taxon>
        <taxon>Ascomycota</taxon>
        <taxon>Saccharomycotina</taxon>
        <taxon>Pichiomycetes</taxon>
        <taxon>Debaryomycetaceae</taxon>
        <taxon>Debaryomyces</taxon>
    </lineage>
</organism>
<accession>Q6BLU9</accession>
<proteinExistence type="inferred from homology"/>
<protein>
    <recommendedName>
        <fullName>Pre-mRNA-splicing ATP-dependent RNA helicase PRP28</fullName>
        <ecNumber>3.6.4.13</ecNumber>
    </recommendedName>
</protein>
<gene>
    <name type="primary">PRP28</name>
    <name type="ordered locus">DEHA2F10538g</name>
</gene>